<comment type="catalytic activity">
    <reaction evidence="1">
        <text>(4aS,6R)-4a-hydroxy-L-erythro-5,6,7,8-tetrahydrobiopterin = (6R)-L-erythro-6,7-dihydrobiopterin + H2O</text>
        <dbReference type="Rhea" id="RHEA:11920"/>
        <dbReference type="ChEBI" id="CHEBI:15377"/>
        <dbReference type="ChEBI" id="CHEBI:15642"/>
        <dbReference type="ChEBI" id="CHEBI:43120"/>
        <dbReference type="EC" id="4.2.1.96"/>
    </reaction>
</comment>
<comment type="similarity">
    <text evidence="1">Belongs to the pterin-4-alpha-carbinolamine dehydratase family.</text>
</comment>
<gene>
    <name type="ordered locus">Pcar_2286</name>
</gene>
<dbReference type="EC" id="4.2.1.96" evidence="1"/>
<dbReference type="EMBL" id="CP000142">
    <property type="protein sequence ID" value="ABA89525.1"/>
    <property type="molecule type" value="Genomic_DNA"/>
</dbReference>
<dbReference type="RefSeq" id="WP_011342043.1">
    <property type="nucleotide sequence ID" value="NC_007498.2"/>
</dbReference>
<dbReference type="SMR" id="Q3A282"/>
<dbReference type="STRING" id="338963.Pcar_2286"/>
<dbReference type="KEGG" id="pca:Pcar_2286"/>
<dbReference type="eggNOG" id="COG2154">
    <property type="taxonomic scope" value="Bacteria"/>
</dbReference>
<dbReference type="HOGENOM" id="CLU_081974_2_2_7"/>
<dbReference type="OrthoDB" id="15077at2"/>
<dbReference type="Proteomes" id="UP000002534">
    <property type="component" value="Chromosome"/>
</dbReference>
<dbReference type="GO" id="GO:0008124">
    <property type="term" value="F:4-alpha-hydroxytetrahydrobiopterin dehydratase activity"/>
    <property type="evidence" value="ECO:0007669"/>
    <property type="project" value="UniProtKB-UniRule"/>
</dbReference>
<dbReference type="GO" id="GO:0006729">
    <property type="term" value="P:tetrahydrobiopterin biosynthetic process"/>
    <property type="evidence" value="ECO:0007669"/>
    <property type="project" value="InterPro"/>
</dbReference>
<dbReference type="CDD" id="cd00913">
    <property type="entry name" value="PCD_DCoH_subfamily_a"/>
    <property type="match status" value="1"/>
</dbReference>
<dbReference type="Gene3D" id="3.30.1360.20">
    <property type="entry name" value="Transcriptional coactivator/pterin dehydratase"/>
    <property type="match status" value="1"/>
</dbReference>
<dbReference type="HAMAP" id="MF_00434">
    <property type="entry name" value="Pterin_4_alpha"/>
    <property type="match status" value="1"/>
</dbReference>
<dbReference type="InterPro" id="IPR036428">
    <property type="entry name" value="PCD_sf"/>
</dbReference>
<dbReference type="InterPro" id="IPR050376">
    <property type="entry name" value="Pterin-4-alpha-carb_dehyd"/>
</dbReference>
<dbReference type="InterPro" id="IPR001533">
    <property type="entry name" value="Pterin_deHydtase"/>
</dbReference>
<dbReference type="NCBIfam" id="NF002016">
    <property type="entry name" value="PRK00823.1-1"/>
    <property type="match status" value="1"/>
</dbReference>
<dbReference type="PANTHER" id="PTHR42805">
    <property type="entry name" value="PTERIN-4-ALPHA-CARBINOLAMINE DEHYDRATASE-RELATED"/>
    <property type="match status" value="1"/>
</dbReference>
<dbReference type="PANTHER" id="PTHR42805:SF1">
    <property type="entry name" value="PTERIN-4-ALPHA-CARBINOLAMINE DEHYDRATASE-RELATED"/>
    <property type="match status" value="1"/>
</dbReference>
<dbReference type="Pfam" id="PF01329">
    <property type="entry name" value="Pterin_4a"/>
    <property type="match status" value="1"/>
</dbReference>
<dbReference type="SUPFAM" id="SSF55248">
    <property type="entry name" value="PCD-like"/>
    <property type="match status" value="1"/>
</dbReference>
<proteinExistence type="inferred from homology"/>
<protein>
    <recommendedName>
        <fullName evidence="1">Putative pterin-4-alpha-carbinolamine dehydratase</fullName>
        <shortName evidence="1">PHS</shortName>
        <ecNumber evidence="1">4.2.1.96</ecNumber>
    </recommendedName>
    <alternativeName>
        <fullName evidence="1">4-alpha-hydroxy-tetrahydropterin dehydratase</fullName>
    </alternativeName>
    <alternativeName>
        <fullName evidence="1">Pterin carbinolamine dehydratase</fullName>
        <shortName evidence="1">PCD</shortName>
    </alternativeName>
</protein>
<evidence type="ECO:0000255" key="1">
    <source>
        <dbReference type="HAMAP-Rule" id="MF_00434"/>
    </source>
</evidence>
<sequence>MERLSEQTCEICRVGAPLATAEEIAGFRSQIPDWQILTIDGVQRLSRTYRFRNFAEALEFTNRVGALAETEGHHPAIVTAWGEVTVQWWTHKIKGLHRNDLIMAAKTDALLE</sequence>
<reference key="1">
    <citation type="submission" date="2005-10" db="EMBL/GenBank/DDBJ databases">
        <title>Complete sequence of Pelobacter carbinolicus DSM 2380.</title>
        <authorList>
            <person name="Copeland A."/>
            <person name="Lucas S."/>
            <person name="Lapidus A."/>
            <person name="Barry K."/>
            <person name="Detter J.C."/>
            <person name="Glavina T."/>
            <person name="Hammon N."/>
            <person name="Israni S."/>
            <person name="Pitluck S."/>
            <person name="Chertkov O."/>
            <person name="Schmutz J."/>
            <person name="Larimer F."/>
            <person name="Land M."/>
            <person name="Kyrpides N."/>
            <person name="Ivanova N."/>
            <person name="Richardson P."/>
        </authorList>
    </citation>
    <scope>NUCLEOTIDE SEQUENCE [LARGE SCALE GENOMIC DNA]</scope>
    <source>
        <strain>DSM 2380 / NBRC 103641 / GraBd1</strain>
    </source>
</reference>
<keyword id="KW-0456">Lyase</keyword>
<keyword id="KW-1185">Reference proteome</keyword>
<organism>
    <name type="scientific">Syntrophotalea carbinolica (strain DSM 2380 / NBRC 103641 / GraBd1)</name>
    <name type="common">Pelobacter carbinolicus</name>
    <dbReference type="NCBI Taxonomy" id="338963"/>
    <lineage>
        <taxon>Bacteria</taxon>
        <taxon>Pseudomonadati</taxon>
        <taxon>Thermodesulfobacteriota</taxon>
        <taxon>Desulfuromonadia</taxon>
        <taxon>Desulfuromonadales</taxon>
        <taxon>Syntrophotaleaceae</taxon>
        <taxon>Syntrophotalea</taxon>
    </lineage>
</organism>
<accession>Q3A282</accession>
<feature type="chain" id="PRO_0000231458" description="Putative pterin-4-alpha-carbinolamine dehydratase">
    <location>
        <begin position="1"/>
        <end position="112"/>
    </location>
</feature>
<name>PHS_SYNC1</name>